<evidence type="ECO:0000255" key="1">
    <source>
        <dbReference type="HAMAP-Rule" id="MF_00215"/>
    </source>
</evidence>
<comment type="catalytic activity">
    <reaction evidence="1">
        <text>(R)-pantothenate + ATP = (R)-4'-phosphopantothenate + ADP + H(+)</text>
        <dbReference type="Rhea" id="RHEA:16373"/>
        <dbReference type="ChEBI" id="CHEBI:10986"/>
        <dbReference type="ChEBI" id="CHEBI:15378"/>
        <dbReference type="ChEBI" id="CHEBI:29032"/>
        <dbReference type="ChEBI" id="CHEBI:30616"/>
        <dbReference type="ChEBI" id="CHEBI:456216"/>
        <dbReference type="EC" id="2.7.1.33"/>
    </reaction>
</comment>
<comment type="pathway">
    <text evidence="1">Cofactor biosynthesis; coenzyme A biosynthesis; CoA from (R)-pantothenate: step 1/5.</text>
</comment>
<comment type="subcellular location">
    <subcellularLocation>
        <location evidence="1">Cytoplasm</location>
    </subcellularLocation>
</comment>
<comment type="similarity">
    <text evidence="1">Belongs to the prokaryotic pantothenate kinase family.</text>
</comment>
<gene>
    <name evidence="1" type="primary">coaA</name>
    <name type="ordered locus">Mmcs_4133</name>
</gene>
<name>COAA_MYCSS</name>
<sequence length="312" mass="35477">MARLSEPSPYVEFDRTQWRALRMSTPLKLTEDELKKLRGLGEKLDLLEVEEVYLPLARLIHLQVAARQRLFAATSEFLGEPQQNPDRPVPFIIGVAGSVAVGKSTTARVLQALLARWGNHARVDLVTTDGFLYPNAELGRRNIMHRKGFPESYDRRALMRFVTAVKSGADYACAPVYSHLLYDIVPGEKQVIRHPDILILEGLNVLQTGPALMVSDLFDFSVYVDARLEDIEGWYISRFLTMRSTAFADPASHFHHYATLTDEQAVFAARDIWHSINRPNLIENILPTRPRATLVLRKDADHAINRLRLRKL</sequence>
<accession>Q1B4E6</accession>
<reference key="1">
    <citation type="submission" date="2006-06" db="EMBL/GenBank/DDBJ databases">
        <title>Complete sequence of chromosome of Mycobacterium sp. MCS.</title>
        <authorList>
            <consortium name="US DOE Joint Genome Institute"/>
            <person name="Copeland A."/>
            <person name="Lucas S."/>
            <person name="Lapidus A."/>
            <person name="Barry K."/>
            <person name="Detter J.C."/>
            <person name="Glavina del Rio T."/>
            <person name="Hammon N."/>
            <person name="Israni S."/>
            <person name="Dalin E."/>
            <person name="Tice H."/>
            <person name="Pitluck S."/>
            <person name="Martinez M."/>
            <person name="Schmutz J."/>
            <person name="Larimer F."/>
            <person name="Land M."/>
            <person name="Hauser L."/>
            <person name="Kyrpides N."/>
            <person name="Kim E."/>
            <person name="Miller C.D."/>
            <person name="Hughes J.E."/>
            <person name="Anderson A.J."/>
            <person name="Sims R.C."/>
            <person name="Richardson P."/>
        </authorList>
    </citation>
    <scope>NUCLEOTIDE SEQUENCE [LARGE SCALE GENOMIC DNA]</scope>
    <source>
        <strain>MCS</strain>
    </source>
</reference>
<protein>
    <recommendedName>
        <fullName evidence="1">Pantothenate kinase</fullName>
        <ecNumber evidence="1">2.7.1.33</ecNumber>
    </recommendedName>
    <alternativeName>
        <fullName evidence="1">Pantothenic acid kinase</fullName>
    </alternativeName>
</protein>
<proteinExistence type="inferred from homology"/>
<dbReference type="EC" id="2.7.1.33" evidence="1"/>
<dbReference type="EMBL" id="CP000384">
    <property type="protein sequence ID" value="ABG10238.1"/>
    <property type="molecule type" value="Genomic_DNA"/>
</dbReference>
<dbReference type="SMR" id="Q1B4E6"/>
<dbReference type="KEGG" id="mmc:Mmcs_4133"/>
<dbReference type="HOGENOM" id="CLU_053818_1_1_11"/>
<dbReference type="BioCyc" id="MSP164756:G1G6O-4220-MONOMER"/>
<dbReference type="UniPathway" id="UPA00241">
    <property type="reaction ID" value="UER00352"/>
</dbReference>
<dbReference type="GO" id="GO:0005737">
    <property type="term" value="C:cytoplasm"/>
    <property type="evidence" value="ECO:0007669"/>
    <property type="project" value="UniProtKB-SubCell"/>
</dbReference>
<dbReference type="GO" id="GO:0005524">
    <property type="term" value="F:ATP binding"/>
    <property type="evidence" value="ECO:0007669"/>
    <property type="project" value="UniProtKB-UniRule"/>
</dbReference>
<dbReference type="GO" id="GO:0004594">
    <property type="term" value="F:pantothenate kinase activity"/>
    <property type="evidence" value="ECO:0007669"/>
    <property type="project" value="UniProtKB-UniRule"/>
</dbReference>
<dbReference type="GO" id="GO:0015937">
    <property type="term" value="P:coenzyme A biosynthetic process"/>
    <property type="evidence" value="ECO:0007669"/>
    <property type="project" value="UniProtKB-UniRule"/>
</dbReference>
<dbReference type="CDD" id="cd02025">
    <property type="entry name" value="PanK"/>
    <property type="match status" value="1"/>
</dbReference>
<dbReference type="FunFam" id="3.40.50.300:FF:000242">
    <property type="entry name" value="Pantothenate kinase"/>
    <property type="match status" value="1"/>
</dbReference>
<dbReference type="Gene3D" id="3.40.50.300">
    <property type="entry name" value="P-loop containing nucleotide triphosphate hydrolases"/>
    <property type="match status" value="1"/>
</dbReference>
<dbReference type="HAMAP" id="MF_00215">
    <property type="entry name" value="Pantothen_kinase_1"/>
    <property type="match status" value="1"/>
</dbReference>
<dbReference type="InterPro" id="IPR027417">
    <property type="entry name" value="P-loop_NTPase"/>
</dbReference>
<dbReference type="InterPro" id="IPR004566">
    <property type="entry name" value="PanK"/>
</dbReference>
<dbReference type="InterPro" id="IPR006083">
    <property type="entry name" value="PRK/URK"/>
</dbReference>
<dbReference type="NCBIfam" id="TIGR00554">
    <property type="entry name" value="panK_bact"/>
    <property type="match status" value="1"/>
</dbReference>
<dbReference type="PANTHER" id="PTHR10285">
    <property type="entry name" value="URIDINE KINASE"/>
    <property type="match status" value="1"/>
</dbReference>
<dbReference type="Pfam" id="PF00485">
    <property type="entry name" value="PRK"/>
    <property type="match status" value="1"/>
</dbReference>
<dbReference type="PIRSF" id="PIRSF000545">
    <property type="entry name" value="Pantothenate_kin"/>
    <property type="match status" value="1"/>
</dbReference>
<dbReference type="SUPFAM" id="SSF52540">
    <property type="entry name" value="P-loop containing nucleoside triphosphate hydrolases"/>
    <property type="match status" value="1"/>
</dbReference>
<organism>
    <name type="scientific">Mycobacterium sp. (strain MCS)</name>
    <dbReference type="NCBI Taxonomy" id="164756"/>
    <lineage>
        <taxon>Bacteria</taxon>
        <taxon>Bacillati</taxon>
        <taxon>Actinomycetota</taxon>
        <taxon>Actinomycetes</taxon>
        <taxon>Mycobacteriales</taxon>
        <taxon>Mycobacteriaceae</taxon>
        <taxon>Mycobacterium</taxon>
    </lineage>
</organism>
<feature type="chain" id="PRO_1000043231" description="Pantothenate kinase">
    <location>
        <begin position="1"/>
        <end position="312"/>
    </location>
</feature>
<feature type="binding site" evidence="1">
    <location>
        <begin position="97"/>
        <end position="104"/>
    </location>
    <ligand>
        <name>ATP</name>
        <dbReference type="ChEBI" id="CHEBI:30616"/>
    </ligand>
</feature>
<keyword id="KW-0067">ATP-binding</keyword>
<keyword id="KW-0173">Coenzyme A biosynthesis</keyword>
<keyword id="KW-0963">Cytoplasm</keyword>
<keyword id="KW-0418">Kinase</keyword>
<keyword id="KW-0547">Nucleotide-binding</keyword>
<keyword id="KW-0808">Transferase</keyword>